<feature type="transit peptide" description="Chloroplast" evidence="2">
    <location>
        <begin position="1"/>
        <end position="44"/>
    </location>
</feature>
<feature type="chain" id="PRO_0000000601" description="Magnesium-protoporphyrin IX monomethyl ester [oxidative] cyclase, chloroplastic">
    <location>
        <begin position="45"/>
        <end position="405"/>
    </location>
</feature>
<feature type="region of interest" description="Disordered" evidence="3">
    <location>
        <begin position="33"/>
        <end position="54"/>
    </location>
</feature>
<feature type="compositionally biased region" description="Low complexity" evidence="3">
    <location>
        <begin position="33"/>
        <end position="47"/>
    </location>
</feature>
<comment type="function">
    <text evidence="1">Catalyzes the formation of the isocyclic ring in chlorophyll biosynthesis. Mediates the cyclase reaction, which results in the formation of divinylprotochlorophyllide (Pchlide) characteristic of all chlorophylls from magnesium-protoporphyrin IX 13-monomethyl ester (MgPMME) (By similarity).</text>
</comment>
<comment type="catalytic activity">
    <reaction>
        <text>Mg-protoporphyrin IX 13-monomethyl ester + 3 NADPH + 3 O2 + 2 H(+) = 3,8-divinyl protochlorophyllide a + 3 NADP(+) + 5 H2O</text>
        <dbReference type="Rhea" id="RHEA:33235"/>
        <dbReference type="ChEBI" id="CHEBI:15377"/>
        <dbReference type="ChEBI" id="CHEBI:15378"/>
        <dbReference type="ChEBI" id="CHEBI:15379"/>
        <dbReference type="ChEBI" id="CHEBI:57783"/>
        <dbReference type="ChEBI" id="CHEBI:58349"/>
        <dbReference type="ChEBI" id="CHEBI:58632"/>
        <dbReference type="ChEBI" id="CHEBI:60491"/>
        <dbReference type="EC" id="1.14.13.81"/>
    </reaction>
</comment>
<comment type="cofactor">
    <cofactor evidence="1">
        <name>Fe cation</name>
        <dbReference type="ChEBI" id="CHEBI:24875"/>
    </cofactor>
</comment>
<comment type="pathway">
    <text>Porphyrin-containing compound metabolism; chlorophyll biosynthesis.</text>
</comment>
<comment type="subcellular location">
    <subcellularLocation>
        <location evidence="1">Plastid</location>
        <location evidence="1">Chloroplast</location>
    </subcellularLocation>
</comment>
<comment type="similarity">
    <text evidence="4">Belongs to the AcsF family.</text>
</comment>
<organism>
    <name type="scientific">Euphorbia esula</name>
    <name type="common">Leafy spurge</name>
    <dbReference type="NCBI Taxonomy" id="3993"/>
    <lineage>
        <taxon>Eukaryota</taxon>
        <taxon>Viridiplantae</taxon>
        <taxon>Streptophyta</taxon>
        <taxon>Embryophyta</taxon>
        <taxon>Tracheophyta</taxon>
        <taxon>Spermatophyta</taxon>
        <taxon>Magnoliopsida</taxon>
        <taxon>eudicotyledons</taxon>
        <taxon>Gunneridae</taxon>
        <taxon>Pentapetalae</taxon>
        <taxon>rosids</taxon>
        <taxon>fabids</taxon>
        <taxon>Malpighiales</taxon>
        <taxon>Euphorbiaceae</taxon>
        <taxon>Euphorbioideae</taxon>
        <taxon>Euphorbieae</taxon>
        <taxon>Euphorbia</taxon>
        <taxon>Euphorbia subgen. Esula</taxon>
        <taxon>Euphorbia sect. Esula</taxon>
    </lineage>
</organism>
<sequence length="405" mass="47310">MAAEMALVKPITPKFINPMRTFSSSSKFSTIKMSATSQSNTTTTATKPSKKGNKKEINETLLTPRFYTTDFDEMETLFNTEINKKLNQSEFEALLQEFKTDYNQTHFVRNKEFKEAADKMQGPLRQIFVEFLERSCTAEFSGFLLYKELGRRLKKTNPVVAEIFSLMSRDEARHAGFLNKGLSDFNYALDLGFLTKARKYTFFKPKFIFYATYLSEKIGYWRYITIYRHLKENPEYQCYPIFKYFENWCQDENRHGDFFSALMKAQPQFLNDWKAKLWARFFCLSVYVTMYLNDCQRTAFYEGIGLDTKEFDMHVIIETNRTTARIFPAVLDVENPEFKRKLDRMVVINQKLQAVGETEDNSVVKNLKRVPLIAALVSEILAAYLMPPIESGSVDFAEFEPKLVY</sequence>
<proteinExistence type="inferred from homology"/>
<evidence type="ECO:0000250" key="1"/>
<evidence type="ECO:0000255" key="2"/>
<evidence type="ECO:0000256" key="3">
    <source>
        <dbReference type="SAM" id="MobiDB-lite"/>
    </source>
</evidence>
<evidence type="ECO:0000305" key="4"/>
<gene>
    <name type="primary">CRD1</name>
    <name type="synonym">AT103</name>
</gene>
<accession>Q945B7</accession>
<name>CRD1_EUPES</name>
<dbReference type="EC" id="1.14.13.81"/>
<dbReference type="EMBL" id="AF417577">
    <property type="protein sequence ID" value="AAL13304.1"/>
    <property type="molecule type" value="Genomic_DNA"/>
</dbReference>
<dbReference type="UniPathway" id="UPA00668"/>
<dbReference type="GO" id="GO:0009535">
    <property type="term" value="C:chloroplast thylakoid membrane"/>
    <property type="evidence" value="ECO:0007669"/>
    <property type="project" value="TreeGrafter"/>
</dbReference>
<dbReference type="GO" id="GO:0048529">
    <property type="term" value="F:magnesium-protoporphyrin IX monomethyl ester (oxidative) cyclase activity"/>
    <property type="evidence" value="ECO:0007669"/>
    <property type="project" value="UniProtKB-EC"/>
</dbReference>
<dbReference type="GO" id="GO:0046872">
    <property type="term" value="F:metal ion binding"/>
    <property type="evidence" value="ECO:0007669"/>
    <property type="project" value="UniProtKB-KW"/>
</dbReference>
<dbReference type="GO" id="GO:0015995">
    <property type="term" value="P:chlorophyll biosynthetic process"/>
    <property type="evidence" value="ECO:0007669"/>
    <property type="project" value="UniProtKB-UniPathway"/>
</dbReference>
<dbReference type="GO" id="GO:0015979">
    <property type="term" value="P:photosynthesis"/>
    <property type="evidence" value="ECO:0007669"/>
    <property type="project" value="UniProtKB-KW"/>
</dbReference>
<dbReference type="CDD" id="cd01047">
    <property type="entry name" value="ACSF"/>
    <property type="match status" value="1"/>
</dbReference>
<dbReference type="HAMAP" id="MF_01840">
    <property type="entry name" value="AcsF"/>
    <property type="match status" value="1"/>
</dbReference>
<dbReference type="InterPro" id="IPR008434">
    <property type="entry name" value="AcsF"/>
</dbReference>
<dbReference type="InterPro" id="IPR009078">
    <property type="entry name" value="Ferritin-like_SF"/>
</dbReference>
<dbReference type="InterPro" id="IPR003251">
    <property type="entry name" value="Rr_diiron-bd_dom"/>
</dbReference>
<dbReference type="NCBIfam" id="TIGR02029">
    <property type="entry name" value="AcsF"/>
    <property type="match status" value="1"/>
</dbReference>
<dbReference type="NCBIfam" id="NF010172">
    <property type="entry name" value="PRK13654.1"/>
    <property type="match status" value="1"/>
</dbReference>
<dbReference type="PANTHER" id="PTHR31053">
    <property type="entry name" value="MAGNESIUM-PROTOPORPHYRIN IX MONOMETHYL ESTER [OXIDATIVE] CYCLASE, CHLOROPLASTIC"/>
    <property type="match status" value="1"/>
</dbReference>
<dbReference type="PANTHER" id="PTHR31053:SF2">
    <property type="entry name" value="MAGNESIUM-PROTOPORPHYRIN IX MONOMETHYL ESTER [OXIDATIVE] CYCLASE, CHLOROPLASTIC"/>
    <property type="match status" value="1"/>
</dbReference>
<dbReference type="Pfam" id="PF02915">
    <property type="entry name" value="Rubrerythrin"/>
    <property type="match status" value="1"/>
</dbReference>
<dbReference type="SUPFAM" id="SSF47240">
    <property type="entry name" value="Ferritin-like"/>
    <property type="match status" value="1"/>
</dbReference>
<reference key="1">
    <citation type="submission" date="2001-09" db="EMBL/GenBank/DDBJ databases">
        <title>Novel regulation and promoter analysis of a gene with similarity to the leucine zipper-containing gene At103.</title>
        <authorList>
            <person name="Horvath D.P."/>
        </authorList>
    </citation>
    <scope>NUCLEOTIDE SEQUENCE [GENOMIC DNA]</scope>
</reference>
<keyword id="KW-0149">Chlorophyll biosynthesis</keyword>
<keyword id="KW-0150">Chloroplast</keyword>
<keyword id="KW-0408">Iron</keyword>
<keyword id="KW-0479">Metal-binding</keyword>
<keyword id="KW-0521">NADP</keyword>
<keyword id="KW-0560">Oxidoreductase</keyword>
<keyword id="KW-0602">Photosynthesis</keyword>
<keyword id="KW-0934">Plastid</keyword>
<keyword id="KW-0809">Transit peptide</keyword>
<protein>
    <recommendedName>
        <fullName>Magnesium-protoporphyrin IX monomethyl ester [oxidative] cyclase, chloroplastic</fullName>
        <shortName>Mg-protoporphyrin IX monomethyl ester oxidative cyclase</shortName>
        <ecNumber>1.14.13.81</ecNumber>
    </recommendedName>
</protein>